<keyword id="KW-0963">Cytoplasm</keyword>
<keyword id="KW-0342">GTP-binding</keyword>
<keyword id="KW-0436">Ligase</keyword>
<keyword id="KW-0460">Magnesium</keyword>
<keyword id="KW-0479">Metal-binding</keyword>
<keyword id="KW-0547">Nucleotide-binding</keyword>
<keyword id="KW-0658">Purine biosynthesis</keyword>
<proteinExistence type="inferred from homology"/>
<evidence type="ECO:0000250" key="1"/>
<evidence type="ECO:0000255" key="2">
    <source>
        <dbReference type="HAMAP-Rule" id="MF_03125"/>
    </source>
</evidence>
<comment type="function">
    <text evidence="1">Plays an important role in the de novo pathway and in the salvage pathway of purine nucleotide biosynthesis. Catalyzes the first committed step in the biosynthesis of AMP from IMP (By similarity).</text>
</comment>
<comment type="catalytic activity">
    <reaction evidence="2">
        <text>IMP + L-aspartate + GTP = N(6)-(1,2-dicarboxyethyl)-AMP + GDP + phosphate + 2 H(+)</text>
        <dbReference type="Rhea" id="RHEA:15753"/>
        <dbReference type="ChEBI" id="CHEBI:15378"/>
        <dbReference type="ChEBI" id="CHEBI:29991"/>
        <dbReference type="ChEBI" id="CHEBI:37565"/>
        <dbReference type="ChEBI" id="CHEBI:43474"/>
        <dbReference type="ChEBI" id="CHEBI:57567"/>
        <dbReference type="ChEBI" id="CHEBI:58053"/>
        <dbReference type="ChEBI" id="CHEBI:58189"/>
        <dbReference type="EC" id="6.3.4.4"/>
    </reaction>
</comment>
<comment type="cofactor">
    <cofactor evidence="2">
        <name>Mg(2+)</name>
        <dbReference type="ChEBI" id="CHEBI:18420"/>
    </cofactor>
    <text evidence="2">Binds 1 Mg(2+) ion per subunit.</text>
</comment>
<comment type="pathway">
    <text evidence="2">Purine metabolism; AMP biosynthesis via de novo pathway; AMP from IMP: step 1/2.</text>
</comment>
<comment type="subunit">
    <text evidence="2">Homodimer.</text>
</comment>
<comment type="subcellular location">
    <subcellularLocation>
        <location evidence="2">Cytoplasm</location>
    </subcellularLocation>
</comment>
<comment type="similarity">
    <text evidence="2">Belongs to the adenylosuccinate synthetase family.</text>
</comment>
<accession>Q0TXG3</accession>
<feature type="chain" id="PRO_0000399353" description="Adenylosuccinate synthetase">
    <location>
        <begin position="1"/>
        <end position="425"/>
    </location>
</feature>
<feature type="active site" description="Proton acceptor" evidence="2">
    <location>
        <position position="13"/>
    </location>
</feature>
<feature type="active site" description="Proton donor" evidence="2">
    <location>
        <position position="41"/>
    </location>
</feature>
<feature type="binding site" evidence="2">
    <location>
        <begin position="12"/>
        <end position="18"/>
    </location>
    <ligand>
        <name>GTP</name>
        <dbReference type="ChEBI" id="CHEBI:37565"/>
    </ligand>
</feature>
<feature type="binding site" description="in other chain" evidence="2">
    <location>
        <begin position="13"/>
        <end position="16"/>
    </location>
    <ligand>
        <name>IMP</name>
        <dbReference type="ChEBI" id="CHEBI:58053"/>
        <note>ligand shared between dimeric partners</note>
    </ligand>
</feature>
<feature type="binding site" evidence="2">
    <location>
        <position position="13"/>
    </location>
    <ligand>
        <name>Mg(2+)</name>
        <dbReference type="ChEBI" id="CHEBI:18420"/>
    </ligand>
</feature>
<feature type="binding site" description="in other chain" evidence="2">
    <location>
        <begin position="38"/>
        <end position="41"/>
    </location>
    <ligand>
        <name>IMP</name>
        <dbReference type="ChEBI" id="CHEBI:58053"/>
        <note>ligand shared between dimeric partners</note>
    </ligand>
</feature>
<feature type="binding site" evidence="2">
    <location>
        <begin position="40"/>
        <end position="42"/>
    </location>
    <ligand>
        <name>GTP</name>
        <dbReference type="ChEBI" id="CHEBI:37565"/>
    </ligand>
</feature>
<feature type="binding site" evidence="2">
    <location>
        <position position="40"/>
    </location>
    <ligand>
        <name>Mg(2+)</name>
        <dbReference type="ChEBI" id="CHEBI:18420"/>
    </ligand>
</feature>
<feature type="binding site" description="in other chain" evidence="2">
    <location>
        <position position="129"/>
    </location>
    <ligand>
        <name>IMP</name>
        <dbReference type="ChEBI" id="CHEBI:58053"/>
        <note>ligand shared between dimeric partners</note>
    </ligand>
</feature>
<feature type="binding site" evidence="2">
    <location>
        <position position="143"/>
    </location>
    <ligand>
        <name>IMP</name>
        <dbReference type="ChEBI" id="CHEBI:58053"/>
        <note>ligand shared between dimeric partners</note>
    </ligand>
</feature>
<feature type="binding site" description="in other chain" evidence="2">
    <location>
        <position position="221"/>
    </location>
    <ligand>
        <name>IMP</name>
        <dbReference type="ChEBI" id="CHEBI:58053"/>
        <note>ligand shared between dimeric partners</note>
    </ligand>
</feature>
<feature type="binding site" description="in other chain" evidence="2">
    <location>
        <position position="236"/>
    </location>
    <ligand>
        <name>IMP</name>
        <dbReference type="ChEBI" id="CHEBI:58053"/>
        <note>ligand shared between dimeric partners</note>
    </ligand>
</feature>
<feature type="binding site" evidence="2">
    <location>
        <begin position="296"/>
        <end position="302"/>
    </location>
    <ligand>
        <name>substrate</name>
    </ligand>
</feature>
<feature type="binding site" description="in other chain" evidence="2">
    <location>
        <position position="300"/>
    </location>
    <ligand>
        <name>IMP</name>
        <dbReference type="ChEBI" id="CHEBI:58053"/>
        <note>ligand shared between dimeric partners</note>
    </ligand>
</feature>
<feature type="binding site" evidence="2">
    <location>
        <position position="302"/>
    </location>
    <ligand>
        <name>GTP</name>
        <dbReference type="ChEBI" id="CHEBI:37565"/>
    </ligand>
</feature>
<feature type="binding site" evidence="2">
    <location>
        <begin position="328"/>
        <end position="330"/>
    </location>
    <ligand>
        <name>GTP</name>
        <dbReference type="ChEBI" id="CHEBI:37565"/>
    </ligand>
</feature>
<feature type="binding site" evidence="2">
    <location>
        <begin position="410"/>
        <end position="412"/>
    </location>
    <ligand>
        <name>GTP</name>
        <dbReference type="ChEBI" id="CHEBI:37565"/>
    </ligand>
</feature>
<name>PURA_PHANO</name>
<protein>
    <recommendedName>
        <fullName evidence="2">Adenylosuccinate synthetase</fullName>
        <shortName evidence="2">AMPSase</shortName>
        <shortName evidence="2">AdSS</shortName>
        <ecNumber evidence="2">6.3.4.4</ecNumber>
    </recommendedName>
    <alternativeName>
        <fullName evidence="2">IMP--aspartate ligase</fullName>
    </alternativeName>
</protein>
<gene>
    <name type="ORF">SNOG_15719</name>
</gene>
<sequence length="425" mass="46691">MSVTVVLGAQWGDEGKGKLADILAHESQICCRAQGGNNAGHTIVANGVTYDFHILPSGLVNPNCINVIGSGCVVHVPSFFKELEALEKHGLNTEGRIYISDRAHVVFDVHQQVDGLEEVELGQGFIGTTKKGIGPTYSTKMTRSGLRMCDLFDEEVFEQKLGRVVMGFQKRFGDLLQYDMQAEIEKYKGLREKLAPYVVDQIPLLASAKEKNAKILVEGANALMLDIDYGTYPFVTSSNTGLGGVLTGLTLGWRSLREVIGVVKAYTTRVGSGPFPTEQLNEFGEKLQSVGHEVGVTTGRKRRCGWLDLVVVKHSHACNDYTALNLTKLDVLDDFDELKVATSYSLNGQRLEGFPSNPDMLAQVEVQYETLPGWKKPTTGAKSYMDLPLAARKYVEYIENFVGVKVKWIGVGPARDHMISRSGNI</sequence>
<reference key="1">
    <citation type="journal article" date="2007" name="Plant Cell">
        <title>Dothideomycete-plant interactions illuminated by genome sequencing and EST analysis of the wheat pathogen Stagonospora nodorum.</title>
        <authorList>
            <person name="Hane J.K."/>
            <person name="Lowe R.G.T."/>
            <person name="Solomon P.S."/>
            <person name="Tan K.-C."/>
            <person name="Schoch C.L."/>
            <person name="Spatafora J.W."/>
            <person name="Crous P.W."/>
            <person name="Kodira C.D."/>
            <person name="Birren B.W."/>
            <person name="Galagan J.E."/>
            <person name="Torriani S.F.F."/>
            <person name="McDonald B.A."/>
            <person name="Oliver R.P."/>
        </authorList>
    </citation>
    <scope>NUCLEOTIDE SEQUENCE [LARGE SCALE GENOMIC DNA]</scope>
    <source>
        <strain>SN15 / ATCC MYA-4574 / FGSC 10173</strain>
    </source>
</reference>
<dbReference type="EC" id="6.3.4.4" evidence="2"/>
<dbReference type="EMBL" id="CH445364">
    <property type="protein sequence ID" value="EAT76814.1"/>
    <property type="molecule type" value="Genomic_DNA"/>
</dbReference>
<dbReference type="RefSeq" id="XP_001805858.1">
    <property type="nucleotide sequence ID" value="XM_001805806.1"/>
</dbReference>
<dbReference type="SMR" id="Q0TXG3"/>
<dbReference type="FunCoup" id="Q0TXG3">
    <property type="interactions" value="741"/>
</dbReference>
<dbReference type="STRING" id="321614.Q0TXG3"/>
<dbReference type="EnsemblFungi" id="SNOT_15719">
    <property type="protein sequence ID" value="SNOT_15719"/>
    <property type="gene ID" value="SNOG_15719"/>
</dbReference>
<dbReference type="GeneID" id="5982788"/>
<dbReference type="KEGG" id="pno:SNOG_15719"/>
<dbReference type="VEuPathDB" id="FungiDB:JI435_157190"/>
<dbReference type="eggNOG" id="KOG1355">
    <property type="taxonomic scope" value="Eukaryota"/>
</dbReference>
<dbReference type="HOGENOM" id="CLU_029848_3_2_1"/>
<dbReference type="InParanoid" id="Q0TXG3"/>
<dbReference type="OMA" id="FHHAKPI"/>
<dbReference type="UniPathway" id="UPA00075">
    <property type="reaction ID" value="UER00335"/>
</dbReference>
<dbReference type="Proteomes" id="UP000001055">
    <property type="component" value="Unassembled WGS sequence"/>
</dbReference>
<dbReference type="GO" id="GO:0005737">
    <property type="term" value="C:cytoplasm"/>
    <property type="evidence" value="ECO:0000318"/>
    <property type="project" value="GO_Central"/>
</dbReference>
<dbReference type="GO" id="GO:0004019">
    <property type="term" value="F:adenylosuccinate synthase activity"/>
    <property type="evidence" value="ECO:0000318"/>
    <property type="project" value="GO_Central"/>
</dbReference>
<dbReference type="GO" id="GO:0016208">
    <property type="term" value="F:AMP binding"/>
    <property type="evidence" value="ECO:0007669"/>
    <property type="project" value="EnsemblFungi"/>
</dbReference>
<dbReference type="GO" id="GO:0019002">
    <property type="term" value="F:GMP binding"/>
    <property type="evidence" value="ECO:0007669"/>
    <property type="project" value="EnsemblFungi"/>
</dbReference>
<dbReference type="GO" id="GO:0005525">
    <property type="term" value="F:GTP binding"/>
    <property type="evidence" value="ECO:0007669"/>
    <property type="project" value="UniProtKB-UniRule"/>
</dbReference>
<dbReference type="GO" id="GO:0000287">
    <property type="term" value="F:magnesium ion binding"/>
    <property type="evidence" value="ECO:0007669"/>
    <property type="project" value="UniProtKB-UniRule"/>
</dbReference>
<dbReference type="GO" id="GO:0044208">
    <property type="term" value="P:'de novo' AMP biosynthetic process"/>
    <property type="evidence" value="ECO:0000318"/>
    <property type="project" value="GO_Central"/>
</dbReference>
<dbReference type="GO" id="GO:0071276">
    <property type="term" value="P:cellular response to cadmium ion"/>
    <property type="evidence" value="ECO:0007669"/>
    <property type="project" value="EnsemblFungi"/>
</dbReference>
<dbReference type="GO" id="GO:0046040">
    <property type="term" value="P:IMP metabolic process"/>
    <property type="evidence" value="ECO:0000318"/>
    <property type="project" value="GO_Central"/>
</dbReference>
<dbReference type="CDD" id="cd03108">
    <property type="entry name" value="AdSS"/>
    <property type="match status" value="1"/>
</dbReference>
<dbReference type="FunFam" id="3.90.170.10:FF:000001">
    <property type="entry name" value="Adenylosuccinate synthetase"/>
    <property type="match status" value="1"/>
</dbReference>
<dbReference type="FunFam" id="1.10.300.10:FF:000002">
    <property type="entry name" value="Adenylosuccinate synthetase, chloroplastic"/>
    <property type="match status" value="1"/>
</dbReference>
<dbReference type="Gene3D" id="3.40.440.10">
    <property type="entry name" value="Adenylosuccinate Synthetase, subunit A, domain 1"/>
    <property type="match status" value="1"/>
</dbReference>
<dbReference type="Gene3D" id="1.10.300.10">
    <property type="entry name" value="Adenylosuccinate Synthetase, subunit A, domain 2"/>
    <property type="match status" value="1"/>
</dbReference>
<dbReference type="Gene3D" id="3.90.170.10">
    <property type="entry name" value="Adenylosuccinate Synthetase, subunit A, domain 3"/>
    <property type="match status" value="1"/>
</dbReference>
<dbReference type="HAMAP" id="MF_00011">
    <property type="entry name" value="Adenylosucc_synth"/>
    <property type="match status" value="1"/>
</dbReference>
<dbReference type="InterPro" id="IPR018220">
    <property type="entry name" value="Adenylosuccin_syn_GTP-bd"/>
</dbReference>
<dbReference type="InterPro" id="IPR033128">
    <property type="entry name" value="Adenylosuccin_syn_Lys_AS"/>
</dbReference>
<dbReference type="InterPro" id="IPR042109">
    <property type="entry name" value="Adenylosuccinate_synth_dom1"/>
</dbReference>
<dbReference type="InterPro" id="IPR042110">
    <property type="entry name" value="Adenylosuccinate_synth_dom2"/>
</dbReference>
<dbReference type="InterPro" id="IPR042111">
    <property type="entry name" value="Adenylosuccinate_synth_dom3"/>
</dbReference>
<dbReference type="InterPro" id="IPR001114">
    <property type="entry name" value="Adenylosuccinate_synthetase"/>
</dbReference>
<dbReference type="InterPro" id="IPR027417">
    <property type="entry name" value="P-loop_NTPase"/>
</dbReference>
<dbReference type="NCBIfam" id="NF002223">
    <property type="entry name" value="PRK01117.1"/>
    <property type="match status" value="1"/>
</dbReference>
<dbReference type="NCBIfam" id="TIGR00184">
    <property type="entry name" value="purA"/>
    <property type="match status" value="1"/>
</dbReference>
<dbReference type="PANTHER" id="PTHR11846">
    <property type="entry name" value="ADENYLOSUCCINATE SYNTHETASE"/>
    <property type="match status" value="1"/>
</dbReference>
<dbReference type="PANTHER" id="PTHR11846:SF0">
    <property type="entry name" value="ADENYLOSUCCINATE SYNTHETASE"/>
    <property type="match status" value="1"/>
</dbReference>
<dbReference type="Pfam" id="PF00709">
    <property type="entry name" value="Adenylsucc_synt"/>
    <property type="match status" value="1"/>
</dbReference>
<dbReference type="SMART" id="SM00788">
    <property type="entry name" value="Adenylsucc_synt"/>
    <property type="match status" value="1"/>
</dbReference>
<dbReference type="SUPFAM" id="SSF52540">
    <property type="entry name" value="P-loop containing nucleoside triphosphate hydrolases"/>
    <property type="match status" value="1"/>
</dbReference>
<dbReference type="PROSITE" id="PS01266">
    <property type="entry name" value="ADENYLOSUCCIN_SYN_1"/>
    <property type="match status" value="1"/>
</dbReference>
<dbReference type="PROSITE" id="PS00513">
    <property type="entry name" value="ADENYLOSUCCIN_SYN_2"/>
    <property type="match status" value="1"/>
</dbReference>
<organism>
    <name type="scientific">Phaeosphaeria nodorum (strain SN15 / ATCC MYA-4574 / FGSC 10173)</name>
    <name type="common">Glume blotch fungus</name>
    <name type="synonym">Parastagonospora nodorum</name>
    <dbReference type="NCBI Taxonomy" id="321614"/>
    <lineage>
        <taxon>Eukaryota</taxon>
        <taxon>Fungi</taxon>
        <taxon>Dikarya</taxon>
        <taxon>Ascomycota</taxon>
        <taxon>Pezizomycotina</taxon>
        <taxon>Dothideomycetes</taxon>
        <taxon>Pleosporomycetidae</taxon>
        <taxon>Pleosporales</taxon>
        <taxon>Pleosporineae</taxon>
        <taxon>Phaeosphaeriaceae</taxon>
        <taxon>Parastagonospora</taxon>
    </lineage>
</organism>